<reference key="1">
    <citation type="journal article" date="2005" name="J. Bacteriol.">
        <title>Insights into genome plasticity and pathogenicity of the plant pathogenic Bacterium Xanthomonas campestris pv. vesicatoria revealed by the complete genome sequence.</title>
        <authorList>
            <person name="Thieme F."/>
            <person name="Koebnik R."/>
            <person name="Bekel T."/>
            <person name="Berger C."/>
            <person name="Boch J."/>
            <person name="Buettner D."/>
            <person name="Caldana C."/>
            <person name="Gaigalat L."/>
            <person name="Goesmann A."/>
            <person name="Kay S."/>
            <person name="Kirchner O."/>
            <person name="Lanz C."/>
            <person name="Linke B."/>
            <person name="McHardy A.C."/>
            <person name="Meyer F."/>
            <person name="Mittenhuber G."/>
            <person name="Nies D.H."/>
            <person name="Niesbach-Kloesgen U."/>
            <person name="Patschkowski T."/>
            <person name="Rueckert C."/>
            <person name="Rupp O."/>
            <person name="Schneiker S."/>
            <person name="Schuster S.C."/>
            <person name="Vorhoelter F.J."/>
            <person name="Weber E."/>
            <person name="Puehler A."/>
            <person name="Bonas U."/>
            <person name="Bartels D."/>
            <person name="Kaiser O."/>
        </authorList>
    </citation>
    <scope>NUCLEOTIDE SEQUENCE [LARGE SCALE GENOMIC DNA]</scope>
    <source>
        <strain>85-10</strain>
    </source>
</reference>
<gene>
    <name type="ordered locus">XCV4171</name>
</gene>
<proteinExistence type="inferred from homology"/>
<sequence length="86" mass="9534">MHAYVYKSQRKQDTFVYLATRDDFSGLPAAVQAQLAPLTFVLDVALTPERRLAQADAATVREALGKHGFYLQLPKTIVLAGECDHD</sequence>
<evidence type="ECO:0000255" key="1">
    <source>
        <dbReference type="HAMAP-Rule" id="MF_01866"/>
    </source>
</evidence>
<dbReference type="EMBL" id="AM039952">
    <property type="protein sequence ID" value="CAJ25902.1"/>
    <property type="molecule type" value="Genomic_DNA"/>
</dbReference>
<dbReference type="RefSeq" id="WP_005914803.1">
    <property type="nucleotide sequence ID" value="NZ_CP017190.1"/>
</dbReference>
<dbReference type="SMR" id="Q3BMW1"/>
<dbReference type="STRING" id="456327.BJD11_24540"/>
<dbReference type="KEGG" id="xcv:XCV4171"/>
<dbReference type="eggNOG" id="COG3100">
    <property type="taxonomic scope" value="Bacteria"/>
</dbReference>
<dbReference type="HOGENOM" id="CLU_155118_0_0_6"/>
<dbReference type="Proteomes" id="UP000007069">
    <property type="component" value="Chromosome"/>
</dbReference>
<dbReference type="Gene3D" id="3.10.510.20">
    <property type="entry name" value="YcgL domain"/>
    <property type="match status" value="1"/>
</dbReference>
<dbReference type="HAMAP" id="MF_01866">
    <property type="entry name" value="UPF0745"/>
    <property type="match status" value="1"/>
</dbReference>
<dbReference type="InterPro" id="IPR038068">
    <property type="entry name" value="YcgL-like_sf"/>
</dbReference>
<dbReference type="InterPro" id="IPR027354">
    <property type="entry name" value="YcgL_dom"/>
</dbReference>
<dbReference type="PANTHER" id="PTHR38109">
    <property type="entry name" value="PROTEIN YCGL"/>
    <property type="match status" value="1"/>
</dbReference>
<dbReference type="PANTHER" id="PTHR38109:SF1">
    <property type="entry name" value="PROTEIN YCGL"/>
    <property type="match status" value="1"/>
</dbReference>
<dbReference type="Pfam" id="PF05166">
    <property type="entry name" value="YcgL"/>
    <property type="match status" value="1"/>
</dbReference>
<dbReference type="SUPFAM" id="SSF160191">
    <property type="entry name" value="YcgL-like"/>
    <property type="match status" value="1"/>
</dbReference>
<dbReference type="PROSITE" id="PS51648">
    <property type="entry name" value="YCGL"/>
    <property type="match status" value="1"/>
</dbReference>
<feature type="chain" id="PRO_0000375406" description="YcgL domain-containing protein XCV4171">
    <location>
        <begin position="1"/>
        <end position="86"/>
    </location>
</feature>
<feature type="domain" description="YcgL" evidence="1">
    <location>
        <begin position="1"/>
        <end position="83"/>
    </location>
</feature>
<protein>
    <recommendedName>
        <fullName evidence="1">YcgL domain-containing protein XCV4171</fullName>
    </recommendedName>
</protein>
<name>Y4171_XANE5</name>
<organism>
    <name type="scientific">Xanthomonas euvesicatoria pv. vesicatoria (strain 85-10)</name>
    <name type="common">Xanthomonas campestris pv. vesicatoria</name>
    <dbReference type="NCBI Taxonomy" id="316273"/>
    <lineage>
        <taxon>Bacteria</taxon>
        <taxon>Pseudomonadati</taxon>
        <taxon>Pseudomonadota</taxon>
        <taxon>Gammaproteobacteria</taxon>
        <taxon>Lysobacterales</taxon>
        <taxon>Lysobacteraceae</taxon>
        <taxon>Xanthomonas</taxon>
    </lineage>
</organism>
<accession>Q3BMW1</accession>